<keyword id="KW-0175">Coiled coil</keyword>
<keyword id="KW-0343">GTPase activation</keyword>
<keyword id="KW-0472">Membrane</keyword>
<keyword id="KW-1185">Reference proteome</keyword>
<keyword id="KW-0812">Transmembrane</keyword>
<keyword id="KW-1133">Transmembrane helix</keyword>
<sequence>MSNNSNNNIKTYYIIGIITLIFIVSAVIKNQLSSSNQEQQEEEEETDSMGKSKGRGNKKGKKPEKIQEKKLDNHLKNLEKVKLQEDFKLQQDEKQQLKKEETILVEKQEIVVDELKNKKDEEKQQQQQEEDQQQQQQQQQEEEEEEEEQQEIEEDEEEEEGQEQEEEEEQQEIEEGEEEQQEEEQEEEQFSMFGVSIERLMDFQRQEDENEGSDEVEESSKVPIVLSFMLDRIKNLNGFKTEGLFRVNGNLKLVEQLATEGFDPFSDDLDPNVNTWASLLKKWIRDLPEPLIPHELNPIILDFCTNNNINNTCNNNNDNNNNNNFNVCASTNNLGNVLNLSTNICNNNNNNNNNNNNNNNNNNNNDNNNNNNESIEKKITNIINMIKSDDHRNVLYKIGEFFGEMLQEETVLITKINVESLSKILTPSLFKPNNIIDDFSNGSLNGSGNQIPKYLTTLDLPSILLKQKKEIAFVSCLLNYFKDEYSKKLQEQNDQEEDNQEEEKDNQEEDEDEEDKDQEE</sequence>
<feature type="chain" id="PRO_0000380219" description="Rho GTPase-activating protein gacV">
    <location>
        <begin position="1"/>
        <end position="520"/>
    </location>
</feature>
<feature type="transmembrane region" description="Helical" evidence="2">
    <location>
        <begin position="8"/>
        <end position="28"/>
    </location>
</feature>
<feature type="domain" description="Rho-GAP" evidence="3">
    <location>
        <begin position="195"/>
        <end position="472"/>
    </location>
</feature>
<feature type="region of interest" description="Disordered" evidence="4">
    <location>
        <begin position="33"/>
        <end position="73"/>
    </location>
</feature>
<feature type="region of interest" description="Disordered" evidence="4">
    <location>
        <begin position="121"/>
        <end position="189"/>
    </location>
</feature>
<feature type="region of interest" description="Disordered" evidence="4">
    <location>
        <begin position="348"/>
        <end position="373"/>
    </location>
</feature>
<feature type="region of interest" description="Disordered" evidence="4">
    <location>
        <begin position="489"/>
        <end position="520"/>
    </location>
</feature>
<feature type="coiled-coil region" evidence="2">
    <location>
        <begin position="28"/>
        <end position="192"/>
    </location>
</feature>
<feature type="coiled-coil region" evidence="2">
    <location>
        <begin position="480"/>
        <end position="520"/>
    </location>
</feature>
<feature type="compositionally biased region" description="Basic residues" evidence="4">
    <location>
        <begin position="52"/>
        <end position="62"/>
    </location>
</feature>
<feature type="compositionally biased region" description="Basic and acidic residues" evidence="4">
    <location>
        <begin position="63"/>
        <end position="73"/>
    </location>
</feature>
<feature type="compositionally biased region" description="Acidic residues" evidence="4">
    <location>
        <begin position="140"/>
        <end position="189"/>
    </location>
</feature>
<feature type="compositionally biased region" description="Low complexity" evidence="4">
    <location>
        <begin position="348"/>
        <end position="372"/>
    </location>
</feature>
<feature type="compositionally biased region" description="Acidic residues" evidence="4">
    <location>
        <begin position="493"/>
        <end position="520"/>
    </location>
</feature>
<feature type="site" description="Arginine finger; crucial for GTP hydrolysis by stabilizing the transition state" evidence="3">
    <location>
        <position position="246"/>
    </location>
</feature>
<reference key="1">
    <citation type="journal article" date="2005" name="Nature">
        <title>The genome of the social amoeba Dictyostelium discoideum.</title>
        <authorList>
            <person name="Eichinger L."/>
            <person name="Pachebat J.A."/>
            <person name="Gloeckner G."/>
            <person name="Rajandream M.A."/>
            <person name="Sucgang R."/>
            <person name="Berriman M."/>
            <person name="Song J."/>
            <person name="Olsen R."/>
            <person name="Szafranski K."/>
            <person name="Xu Q."/>
            <person name="Tunggal B."/>
            <person name="Kummerfeld S."/>
            <person name="Madera M."/>
            <person name="Konfortov B.A."/>
            <person name="Rivero F."/>
            <person name="Bankier A.T."/>
            <person name="Lehmann R."/>
            <person name="Hamlin N."/>
            <person name="Davies R."/>
            <person name="Gaudet P."/>
            <person name="Fey P."/>
            <person name="Pilcher K."/>
            <person name="Chen G."/>
            <person name="Saunders D."/>
            <person name="Sodergren E.J."/>
            <person name="Davis P."/>
            <person name="Kerhornou A."/>
            <person name="Nie X."/>
            <person name="Hall N."/>
            <person name="Anjard C."/>
            <person name="Hemphill L."/>
            <person name="Bason N."/>
            <person name="Farbrother P."/>
            <person name="Desany B."/>
            <person name="Just E."/>
            <person name="Morio T."/>
            <person name="Rost R."/>
            <person name="Churcher C.M."/>
            <person name="Cooper J."/>
            <person name="Haydock S."/>
            <person name="van Driessche N."/>
            <person name="Cronin A."/>
            <person name="Goodhead I."/>
            <person name="Muzny D.M."/>
            <person name="Mourier T."/>
            <person name="Pain A."/>
            <person name="Lu M."/>
            <person name="Harper D."/>
            <person name="Lindsay R."/>
            <person name="Hauser H."/>
            <person name="James K.D."/>
            <person name="Quiles M."/>
            <person name="Madan Babu M."/>
            <person name="Saito T."/>
            <person name="Buchrieser C."/>
            <person name="Wardroper A."/>
            <person name="Felder M."/>
            <person name="Thangavelu M."/>
            <person name="Johnson D."/>
            <person name="Knights A."/>
            <person name="Loulseged H."/>
            <person name="Mungall K.L."/>
            <person name="Oliver K."/>
            <person name="Price C."/>
            <person name="Quail M.A."/>
            <person name="Urushihara H."/>
            <person name="Hernandez J."/>
            <person name="Rabbinowitsch E."/>
            <person name="Steffen D."/>
            <person name="Sanders M."/>
            <person name="Ma J."/>
            <person name="Kohara Y."/>
            <person name="Sharp S."/>
            <person name="Simmonds M.N."/>
            <person name="Spiegler S."/>
            <person name="Tivey A."/>
            <person name="Sugano S."/>
            <person name="White B."/>
            <person name="Walker D."/>
            <person name="Woodward J.R."/>
            <person name="Winckler T."/>
            <person name="Tanaka Y."/>
            <person name="Shaulsky G."/>
            <person name="Schleicher M."/>
            <person name="Weinstock G.M."/>
            <person name="Rosenthal A."/>
            <person name="Cox E.C."/>
            <person name="Chisholm R.L."/>
            <person name="Gibbs R.A."/>
            <person name="Loomis W.F."/>
            <person name="Platzer M."/>
            <person name="Kay R.R."/>
            <person name="Williams J.G."/>
            <person name="Dear P.H."/>
            <person name="Noegel A.A."/>
            <person name="Barrell B.G."/>
            <person name="Kuspa A."/>
        </authorList>
    </citation>
    <scope>NUCLEOTIDE SEQUENCE [LARGE SCALE GENOMIC DNA]</scope>
    <source>
        <strain>AX4</strain>
    </source>
</reference>
<protein>
    <recommendedName>
        <fullName>Rho GTPase-activating protein gacV</fullName>
    </recommendedName>
    <alternativeName>
        <fullName>GTPase activating factor for raC protein V</fullName>
    </alternativeName>
</protein>
<accession>Q54BP9</accession>
<organism>
    <name type="scientific">Dictyostelium discoideum</name>
    <name type="common">Social amoeba</name>
    <dbReference type="NCBI Taxonomy" id="44689"/>
    <lineage>
        <taxon>Eukaryota</taxon>
        <taxon>Amoebozoa</taxon>
        <taxon>Evosea</taxon>
        <taxon>Eumycetozoa</taxon>
        <taxon>Dictyostelia</taxon>
        <taxon>Dictyosteliales</taxon>
        <taxon>Dictyosteliaceae</taxon>
        <taxon>Dictyostelium</taxon>
    </lineage>
</organism>
<proteinExistence type="inferred from homology"/>
<dbReference type="EMBL" id="AAFI02000217">
    <property type="protein sequence ID" value="EAL60690.1"/>
    <property type="molecule type" value="Genomic_DNA"/>
</dbReference>
<dbReference type="RefSeq" id="XP_629103.1">
    <property type="nucleotide sequence ID" value="XM_629101.1"/>
</dbReference>
<dbReference type="SMR" id="Q54BP9"/>
<dbReference type="FunCoup" id="Q54BP9">
    <property type="interactions" value="616"/>
</dbReference>
<dbReference type="STRING" id="44689.Q54BP9"/>
<dbReference type="PaxDb" id="44689-DDB0233640"/>
<dbReference type="EnsemblProtists" id="EAL60690">
    <property type="protein sequence ID" value="EAL60690"/>
    <property type="gene ID" value="DDB_G0293510"/>
</dbReference>
<dbReference type="GeneID" id="8629262"/>
<dbReference type="KEGG" id="ddi:DDB_G0293510"/>
<dbReference type="dictyBase" id="DDB_G0293510">
    <property type="gene designation" value="gacV"/>
</dbReference>
<dbReference type="VEuPathDB" id="AmoebaDB:DDB_G0293510"/>
<dbReference type="eggNOG" id="KOG4270">
    <property type="taxonomic scope" value="Eukaryota"/>
</dbReference>
<dbReference type="HOGENOM" id="CLU_524227_0_0_1"/>
<dbReference type="InParanoid" id="Q54BP9"/>
<dbReference type="OMA" id="EQFSMFG"/>
<dbReference type="PRO" id="PR:Q54BP9"/>
<dbReference type="Proteomes" id="UP000002195">
    <property type="component" value="Chromosome 6"/>
</dbReference>
<dbReference type="GO" id="GO:0005737">
    <property type="term" value="C:cytoplasm"/>
    <property type="evidence" value="ECO:0000318"/>
    <property type="project" value="GO_Central"/>
</dbReference>
<dbReference type="GO" id="GO:0016020">
    <property type="term" value="C:membrane"/>
    <property type="evidence" value="ECO:0007669"/>
    <property type="project" value="UniProtKB-SubCell"/>
</dbReference>
<dbReference type="GO" id="GO:0005096">
    <property type="term" value="F:GTPase activator activity"/>
    <property type="evidence" value="ECO:0000318"/>
    <property type="project" value="GO_Central"/>
</dbReference>
<dbReference type="GO" id="GO:0007165">
    <property type="term" value="P:signal transduction"/>
    <property type="evidence" value="ECO:0007669"/>
    <property type="project" value="InterPro"/>
</dbReference>
<dbReference type="Gene3D" id="1.10.555.10">
    <property type="entry name" value="Rho GTPase activation protein"/>
    <property type="match status" value="1"/>
</dbReference>
<dbReference type="InterPro" id="IPR008936">
    <property type="entry name" value="Rho_GTPase_activation_prot"/>
</dbReference>
<dbReference type="InterPro" id="IPR000198">
    <property type="entry name" value="RhoGAP_dom"/>
</dbReference>
<dbReference type="PANTHER" id="PTHR45876">
    <property type="entry name" value="FI04035P"/>
    <property type="match status" value="1"/>
</dbReference>
<dbReference type="PANTHER" id="PTHR45876:SF8">
    <property type="entry name" value="FI04035P"/>
    <property type="match status" value="1"/>
</dbReference>
<dbReference type="Pfam" id="PF00620">
    <property type="entry name" value="RhoGAP"/>
    <property type="match status" value="1"/>
</dbReference>
<dbReference type="SMART" id="SM00324">
    <property type="entry name" value="RhoGAP"/>
    <property type="match status" value="1"/>
</dbReference>
<dbReference type="SUPFAM" id="SSF48350">
    <property type="entry name" value="GTPase activation domain, GAP"/>
    <property type="match status" value="1"/>
</dbReference>
<dbReference type="PROSITE" id="PS50238">
    <property type="entry name" value="RHOGAP"/>
    <property type="match status" value="1"/>
</dbReference>
<name>GACV_DICDI</name>
<evidence type="ECO:0000250" key="1"/>
<evidence type="ECO:0000255" key="2"/>
<evidence type="ECO:0000255" key="3">
    <source>
        <dbReference type="PROSITE-ProRule" id="PRU00172"/>
    </source>
</evidence>
<evidence type="ECO:0000256" key="4">
    <source>
        <dbReference type="SAM" id="MobiDB-lite"/>
    </source>
</evidence>
<evidence type="ECO:0000305" key="5"/>
<gene>
    <name type="primary">gacV</name>
    <name type="ORF">DDB_G0293510</name>
</gene>
<comment type="function">
    <text evidence="1">Rho GTPase-activating protein involved in the signal transduction pathway.</text>
</comment>
<comment type="subcellular location">
    <subcellularLocation>
        <location evidence="5">Membrane</location>
        <topology evidence="5">Single-pass membrane protein</topology>
    </subcellularLocation>
</comment>